<gene>
    <name type="primary">alr</name>
    <name type="ordered locus">COPRO5265_1229</name>
</gene>
<proteinExistence type="inferred from homology"/>
<comment type="function">
    <text evidence="1">Catalyzes the interconversion of L-alanine and D-alanine. May also act on other amino acids.</text>
</comment>
<comment type="catalytic activity">
    <reaction evidence="1">
        <text>L-alanine = D-alanine</text>
        <dbReference type="Rhea" id="RHEA:20249"/>
        <dbReference type="ChEBI" id="CHEBI:57416"/>
        <dbReference type="ChEBI" id="CHEBI:57972"/>
        <dbReference type="EC" id="5.1.1.1"/>
    </reaction>
</comment>
<comment type="cofactor">
    <cofactor evidence="1">
        <name>pyridoxal 5'-phosphate</name>
        <dbReference type="ChEBI" id="CHEBI:597326"/>
    </cofactor>
</comment>
<comment type="pathway">
    <text evidence="1">Amino-acid biosynthesis; D-alanine biosynthesis; D-alanine from L-alanine: step 1/1.</text>
</comment>
<comment type="similarity">
    <text evidence="1">Belongs to the alanine racemase family.</text>
</comment>
<keyword id="KW-0413">Isomerase</keyword>
<keyword id="KW-0663">Pyridoxal phosphate</keyword>
<keyword id="KW-1185">Reference proteome</keyword>
<accession>B5Y9T8</accession>
<feature type="chain" id="PRO_1000138590" description="Alanine racemase">
    <location>
        <begin position="1"/>
        <end position="348"/>
    </location>
</feature>
<feature type="active site" description="Proton acceptor; specific for D-alanine" evidence="1">
    <location>
        <position position="34"/>
    </location>
</feature>
<feature type="active site" description="Proton acceptor; specific for L-alanine" evidence="1">
    <location>
        <position position="243"/>
    </location>
</feature>
<feature type="binding site" evidence="1">
    <location>
        <position position="127"/>
    </location>
    <ligand>
        <name>substrate</name>
    </ligand>
</feature>
<feature type="binding site" evidence="1">
    <location>
        <position position="291"/>
    </location>
    <ligand>
        <name>substrate</name>
    </ligand>
</feature>
<feature type="modified residue" description="N6-(pyridoxal phosphate)lysine" evidence="1">
    <location>
        <position position="34"/>
    </location>
</feature>
<name>ALR_COPPD</name>
<dbReference type="EC" id="5.1.1.1" evidence="1"/>
<dbReference type="EMBL" id="CP001145">
    <property type="protein sequence ID" value="ACI17536.1"/>
    <property type="molecule type" value="Genomic_DNA"/>
</dbReference>
<dbReference type="RefSeq" id="WP_012544188.1">
    <property type="nucleotide sequence ID" value="NC_011295.1"/>
</dbReference>
<dbReference type="SMR" id="B5Y9T8"/>
<dbReference type="STRING" id="309798.COPRO5265_1229"/>
<dbReference type="KEGG" id="cpo:COPRO5265_1229"/>
<dbReference type="eggNOG" id="COG0787">
    <property type="taxonomic scope" value="Bacteria"/>
</dbReference>
<dbReference type="HOGENOM" id="CLU_028393_2_2_9"/>
<dbReference type="OrthoDB" id="9813814at2"/>
<dbReference type="UniPathway" id="UPA00042">
    <property type="reaction ID" value="UER00497"/>
</dbReference>
<dbReference type="Proteomes" id="UP000001732">
    <property type="component" value="Chromosome"/>
</dbReference>
<dbReference type="GO" id="GO:0005829">
    <property type="term" value="C:cytosol"/>
    <property type="evidence" value="ECO:0007669"/>
    <property type="project" value="TreeGrafter"/>
</dbReference>
<dbReference type="GO" id="GO:0008784">
    <property type="term" value="F:alanine racemase activity"/>
    <property type="evidence" value="ECO:0007669"/>
    <property type="project" value="UniProtKB-UniRule"/>
</dbReference>
<dbReference type="GO" id="GO:0030170">
    <property type="term" value="F:pyridoxal phosphate binding"/>
    <property type="evidence" value="ECO:0007669"/>
    <property type="project" value="UniProtKB-UniRule"/>
</dbReference>
<dbReference type="GO" id="GO:0030632">
    <property type="term" value="P:D-alanine biosynthetic process"/>
    <property type="evidence" value="ECO:0007669"/>
    <property type="project" value="UniProtKB-UniRule"/>
</dbReference>
<dbReference type="CDD" id="cd00430">
    <property type="entry name" value="PLPDE_III_AR"/>
    <property type="match status" value="1"/>
</dbReference>
<dbReference type="Gene3D" id="3.20.20.10">
    <property type="entry name" value="Alanine racemase"/>
    <property type="match status" value="1"/>
</dbReference>
<dbReference type="Gene3D" id="2.40.37.10">
    <property type="entry name" value="Lyase, Ornithine Decarboxylase, Chain A, domain 1"/>
    <property type="match status" value="1"/>
</dbReference>
<dbReference type="HAMAP" id="MF_01201">
    <property type="entry name" value="Ala_racemase"/>
    <property type="match status" value="1"/>
</dbReference>
<dbReference type="InterPro" id="IPR000821">
    <property type="entry name" value="Ala_racemase"/>
</dbReference>
<dbReference type="InterPro" id="IPR009006">
    <property type="entry name" value="Ala_racemase/Decarboxylase_C"/>
</dbReference>
<dbReference type="InterPro" id="IPR011079">
    <property type="entry name" value="Ala_racemase_C"/>
</dbReference>
<dbReference type="InterPro" id="IPR001608">
    <property type="entry name" value="Ala_racemase_N"/>
</dbReference>
<dbReference type="InterPro" id="IPR020622">
    <property type="entry name" value="Ala_racemase_pyridoxalP-BS"/>
</dbReference>
<dbReference type="InterPro" id="IPR029066">
    <property type="entry name" value="PLP-binding_barrel"/>
</dbReference>
<dbReference type="NCBIfam" id="TIGR00492">
    <property type="entry name" value="alr"/>
    <property type="match status" value="1"/>
</dbReference>
<dbReference type="PANTHER" id="PTHR30511">
    <property type="entry name" value="ALANINE RACEMASE"/>
    <property type="match status" value="1"/>
</dbReference>
<dbReference type="PANTHER" id="PTHR30511:SF0">
    <property type="entry name" value="ALANINE RACEMASE, CATABOLIC-RELATED"/>
    <property type="match status" value="1"/>
</dbReference>
<dbReference type="Pfam" id="PF00842">
    <property type="entry name" value="Ala_racemase_C"/>
    <property type="match status" value="1"/>
</dbReference>
<dbReference type="Pfam" id="PF01168">
    <property type="entry name" value="Ala_racemase_N"/>
    <property type="match status" value="1"/>
</dbReference>
<dbReference type="PRINTS" id="PR00992">
    <property type="entry name" value="ALARACEMASE"/>
</dbReference>
<dbReference type="SMART" id="SM01005">
    <property type="entry name" value="Ala_racemase_C"/>
    <property type="match status" value="1"/>
</dbReference>
<dbReference type="SUPFAM" id="SSF50621">
    <property type="entry name" value="Alanine racemase C-terminal domain-like"/>
    <property type="match status" value="1"/>
</dbReference>
<dbReference type="SUPFAM" id="SSF51419">
    <property type="entry name" value="PLP-binding barrel"/>
    <property type="match status" value="1"/>
</dbReference>
<dbReference type="PROSITE" id="PS00395">
    <property type="entry name" value="ALANINE_RACEMASE"/>
    <property type="match status" value="1"/>
</dbReference>
<organism>
    <name type="scientific">Coprothermobacter proteolyticus (strain ATCC 35245 / DSM 5265 / OCM 4 / BT)</name>
    <dbReference type="NCBI Taxonomy" id="309798"/>
    <lineage>
        <taxon>Bacteria</taxon>
        <taxon>Pseudomonadati</taxon>
        <taxon>Coprothermobacterota</taxon>
        <taxon>Coprothermobacteria</taxon>
        <taxon>Coprothermobacterales</taxon>
        <taxon>Coprothermobacteraceae</taxon>
        <taxon>Coprothermobacter</taxon>
    </lineage>
</organism>
<reference key="1">
    <citation type="submission" date="2008-08" db="EMBL/GenBank/DDBJ databases">
        <title>The complete genome sequence of Coprothermobacter proteolyticus strain ATCC 5245 / DSM 5265 / BT.</title>
        <authorList>
            <person name="Dodson R.J."/>
            <person name="Durkin A.S."/>
            <person name="Wu M."/>
            <person name="Eisen J."/>
            <person name="Sutton G."/>
        </authorList>
    </citation>
    <scope>NUCLEOTIDE SEQUENCE [LARGE SCALE GENOMIC DNA]</scope>
    <source>
        <strain>ATCC 35245 / DSM 5265 / OCM 4 / BT</strain>
    </source>
</reference>
<protein>
    <recommendedName>
        <fullName evidence="1">Alanine racemase</fullName>
        <ecNumber evidence="1">5.1.1.1</ecNumber>
    </recommendedName>
</protein>
<sequence length="348" mass="38878">MWNKWAEVSRMNLKNNVELIRQKLPDLEPIAVVKDDAYGHDAAVVVPELLKNGITKFAVVYAKDALMLSEFGAEWILVLDDPPLSNMCSEYEKRGIRFCITDSKWLSDGLLELPIKFHLFVDVGMHREGVPWYETNTIREICKVVGNRLEGICSHLSNGLSDSQALATEEERFREVLSIAPEGLMVHLSNSASLYNAKFPYATHFRPGISLYGYGYPGLKPVLSLKARVIHEHILEPGEGLSYGWTWRATEPTHVVTVPVGYGDGYNRKLSNKAIAGSKAGNLQQIGTVTMDFTMFEAPKNVTVGDEIVLMGEWEGGHFWADEMAQLVGTIPYEVLTSINPRVPRVLV</sequence>
<evidence type="ECO:0000255" key="1">
    <source>
        <dbReference type="HAMAP-Rule" id="MF_01201"/>
    </source>
</evidence>